<evidence type="ECO:0000255" key="1">
    <source>
        <dbReference type="HAMAP-Rule" id="MF_00109"/>
    </source>
</evidence>
<protein>
    <recommendedName>
        <fullName evidence="1">Shikimate kinase</fullName>
        <shortName evidence="1">SK</shortName>
        <ecNumber evidence="1">2.7.1.71</ecNumber>
    </recommendedName>
</protein>
<accession>A4VTX6</accession>
<organism>
    <name type="scientific">Streptococcus suis (strain 05ZYH33)</name>
    <dbReference type="NCBI Taxonomy" id="391295"/>
    <lineage>
        <taxon>Bacteria</taxon>
        <taxon>Bacillati</taxon>
        <taxon>Bacillota</taxon>
        <taxon>Bacilli</taxon>
        <taxon>Lactobacillales</taxon>
        <taxon>Streptococcaceae</taxon>
        <taxon>Streptococcus</taxon>
    </lineage>
</organism>
<feature type="chain" id="PRO_1000094426" description="Shikimate kinase">
    <location>
        <begin position="1"/>
        <end position="163"/>
    </location>
</feature>
<feature type="binding site" evidence="1">
    <location>
        <begin position="10"/>
        <end position="15"/>
    </location>
    <ligand>
        <name>ATP</name>
        <dbReference type="ChEBI" id="CHEBI:30616"/>
    </ligand>
</feature>
<feature type="binding site" evidence="1">
    <location>
        <position position="14"/>
    </location>
    <ligand>
        <name>Mg(2+)</name>
        <dbReference type="ChEBI" id="CHEBI:18420"/>
    </ligand>
</feature>
<feature type="binding site" evidence="1">
    <location>
        <position position="28"/>
    </location>
    <ligand>
        <name>substrate</name>
    </ligand>
</feature>
<feature type="binding site" evidence="1">
    <location>
        <position position="52"/>
    </location>
    <ligand>
        <name>substrate</name>
    </ligand>
</feature>
<feature type="binding site" evidence="1">
    <location>
        <position position="75"/>
    </location>
    <ligand>
        <name>substrate</name>
    </ligand>
</feature>
<feature type="binding site" evidence="1">
    <location>
        <position position="116"/>
    </location>
    <ligand>
        <name>ATP</name>
        <dbReference type="ChEBI" id="CHEBI:30616"/>
    </ligand>
</feature>
<feature type="binding site" evidence="1">
    <location>
        <position position="134"/>
    </location>
    <ligand>
        <name>substrate</name>
    </ligand>
</feature>
<proteinExistence type="inferred from homology"/>
<dbReference type="EC" id="2.7.1.71" evidence="1"/>
<dbReference type="EMBL" id="CP000407">
    <property type="protein sequence ID" value="ABP89565.1"/>
    <property type="molecule type" value="Genomic_DNA"/>
</dbReference>
<dbReference type="SMR" id="A4VTX6"/>
<dbReference type="STRING" id="391295.SSU05_0599"/>
<dbReference type="KEGG" id="ssu:SSU05_0599"/>
<dbReference type="eggNOG" id="COG0703">
    <property type="taxonomic scope" value="Bacteria"/>
</dbReference>
<dbReference type="HOGENOM" id="CLU_057607_4_3_9"/>
<dbReference type="UniPathway" id="UPA00053">
    <property type="reaction ID" value="UER00088"/>
</dbReference>
<dbReference type="GO" id="GO:0005829">
    <property type="term" value="C:cytosol"/>
    <property type="evidence" value="ECO:0007669"/>
    <property type="project" value="TreeGrafter"/>
</dbReference>
<dbReference type="GO" id="GO:0005524">
    <property type="term" value="F:ATP binding"/>
    <property type="evidence" value="ECO:0007669"/>
    <property type="project" value="UniProtKB-UniRule"/>
</dbReference>
<dbReference type="GO" id="GO:0000287">
    <property type="term" value="F:magnesium ion binding"/>
    <property type="evidence" value="ECO:0007669"/>
    <property type="project" value="UniProtKB-UniRule"/>
</dbReference>
<dbReference type="GO" id="GO:0004765">
    <property type="term" value="F:shikimate kinase activity"/>
    <property type="evidence" value="ECO:0007669"/>
    <property type="project" value="UniProtKB-UniRule"/>
</dbReference>
<dbReference type="GO" id="GO:0008652">
    <property type="term" value="P:amino acid biosynthetic process"/>
    <property type="evidence" value="ECO:0007669"/>
    <property type="project" value="UniProtKB-KW"/>
</dbReference>
<dbReference type="GO" id="GO:0009073">
    <property type="term" value="P:aromatic amino acid family biosynthetic process"/>
    <property type="evidence" value="ECO:0007669"/>
    <property type="project" value="UniProtKB-KW"/>
</dbReference>
<dbReference type="GO" id="GO:0009423">
    <property type="term" value="P:chorismate biosynthetic process"/>
    <property type="evidence" value="ECO:0007669"/>
    <property type="project" value="UniProtKB-UniRule"/>
</dbReference>
<dbReference type="CDD" id="cd00464">
    <property type="entry name" value="SK"/>
    <property type="match status" value="1"/>
</dbReference>
<dbReference type="Gene3D" id="3.40.50.300">
    <property type="entry name" value="P-loop containing nucleotide triphosphate hydrolases"/>
    <property type="match status" value="1"/>
</dbReference>
<dbReference type="HAMAP" id="MF_00109">
    <property type="entry name" value="Shikimate_kinase"/>
    <property type="match status" value="1"/>
</dbReference>
<dbReference type="InterPro" id="IPR027417">
    <property type="entry name" value="P-loop_NTPase"/>
</dbReference>
<dbReference type="InterPro" id="IPR031322">
    <property type="entry name" value="Shikimate/glucono_kinase"/>
</dbReference>
<dbReference type="InterPro" id="IPR000623">
    <property type="entry name" value="Shikimate_kinase/TSH1"/>
</dbReference>
<dbReference type="InterPro" id="IPR023000">
    <property type="entry name" value="Shikimate_kinase_CS"/>
</dbReference>
<dbReference type="PANTHER" id="PTHR21087">
    <property type="entry name" value="SHIKIMATE KINASE"/>
    <property type="match status" value="1"/>
</dbReference>
<dbReference type="PANTHER" id="PTHR21087:SF16">
    <property type="entry name" value="SHIKIMATE KINASE 1, CHLOROPLASTIC"/>
    <property type="match status" value="1"/>
</dbReference>
<dbReference type="Pfam" id="PF01202">
    <property type="entry name" value="SKI"/>
    <property type="match status" value="1"/>
</dbReference>
<dbReference type="PRINTS" id="PR01100">
    <property type="entry name" value="SHIKIMTKNASE"/>
</dbReference>
<dbReference type="SUPFAM" id="SSF52540">
    <property type="entry name" value="P-loop containing nucleoside triphosphate hydrolases"/>
    <property type="match status" value="1"/>
</dbReference>
<dbReference type="PROSITE" id="PS01128">
    <property type="entry name" value="SHIKIMATE_KINASE"/>
    <property type="match status" value="1"/>
</dbReference>
<sequence length="163" mass="18463">MPIVLLGFMGVGKTTTAHLLNLPVYDMDHIIEERIGMPIADYFSLEGEASFRQLETEVLKGLLDLPSNCIVSTGGGVIKSEVNRELLLANREDNVLLTASFEVSYQRIRKDRQSQRPLFLQCSKEEFEALYRERMALYQGLADTVIDTDKLIPEQVARKILCK</sequence>
<keyword id="KW-0028">Amino-acid biosynthesis</keyword>
<keyword id="KW-0057">Aromatic amino acid biosynthesis</keyword>
<keyword id="KW-0067">ATP-binding</keyword>
<keyword id="KW-0963">Cytoplasm</keyword>
<keyword id="KW-0418">Kinase</keyword>
<keyword id="KW-0460">Magnesium</keyword>
<keyword id="KW-0479">Metal-binding</keyword>
<keyword id="KW-0547">Nucleotide-binding</keyword>
<keyword id="KW-0808">Transferase</keyword>
<reference key="1">
    <citation type="journal article" date="2007" name="PLoS ONE">
        <title>A glimpse of streptococcal toxic shock syndrome from comparative genomics of S. suis 2 Chinese isolates.</title>
        <authorList>
            <person name="Chen C."/>
            <person name="Tang J."/>
            <person name="Dong W."/>
            <person name="Wang C."/>
            <person name="Feng Y."/>
            <person name="Wang J."/>
            <person name="Zheng F."/>
            <person name="Pan X."/>
            <person name="Liu D."/>
            <person name="Li M."/>
            <person name="Song Y."/>
            <person name="Zhu X."/>
            <person name="Sun H."/>
            <person name="Feng T."/>
            <person name="Guo Z."/>
            <person name="Ju A."/>
            <person name="Ge J."/>
            <person name="Dong Y."/>
            <person name="Sun W."/>
            <person name="Jiang Y."/>
            <person name="Wang J."/>
            <person name="Yan J."/>
            <person name="Yang H."/>
            <person name="Wang X."/>
            <person name="Gao G.F."/>
            <person name="Yang R."/>
            <person name="Wang J."/>
            <person name="Yu J."/>
        </authorList>
    </citation>
    <scope>NUCLEOTIDE SEQUENCE [LARGE SCALE GENOMIC DNA]</scope>
    <source>
        <strain>05ZYH33</strain>
    </source>
</reference>
<name>AROK_STRSY</name>
<comment type="function">
    <text evidence="1">Catalyzes the specific phosphorylation of the 3-hydroxyl group of shikimic acid using ATP as a cosubstrate.</text>
</comment>
<comment type="catalytic activity">
    <reaction evidence="1">
        <text>shikimate + ATP = 3-phosphoshikimate + ADP + H(+)</text>
        <dbReference type="Rhea" id="RHEA:13121"/>
        <dbReference type="ChEBI" id="CHEBI:15378"/>
        <dbReference type="ChEBI" id="CHEBI:30616"/>
        <dbReference type="ChEBI" id="CHEBI:36208"/>
        <dbReference type="ChEBI" id="CHEBI:145989"/>
        <dbReference type="ChEBI" id="CHEBI:456216"/>
        <dbReference type="EC" id="2.7.1.71"/>
    </reaction>
</comment>
<comment type="cofactor">
    <cofactor evidence="1">
        <name>Mg(2+)</name>
        <dbReference type="ChEBI" id="CHEBI:18420"/>
    </cofactor>
    <text evidence="1">Binds 1 Mg(2+) ion per subunit.</text>
</comment>
<comment type="pathway">
    <text evidence="1">Metabolic intermediate biosynthesis; chorismate biosynthesis; chorismate from D-erythrose 4-phosphate and phosphoenolpyruvate: step 5/7.</text>
</comment>
<comment type="subunit">
    <text evidence="1">Monomer.</text>
</comment>
<comment type="subcellular location">
    <subcellularLocation>
        <location evidence="1">Cytoplasm</location>
    </subcellularLocation>
</comment>
<comment type="similarity">
    <text evidence="1">Belongs to the shikimate kinase family.</text>
</comment>
<gene>
    <name evidence="1" type="primary">aroK</name>
    <name type="ordered locus">SSU05_0599</name>
</gene>